<comment type="function">
    <text evidence="1">Plays a central role in chromosome condensation, segregation and cell cycle progression. Functions as a homodimer, which is essential for chromosome partition. Involved in negative DNA supercoiling in vivo, and by this means organize and compact chromosomes. May achieve or facilitate chromosome segregation by condensation DNA from both sides of a centrally located replisome during cell division.</text>
</comment>
<comment type="subunit">
    <text evidence="1">Homodimerization via its hinge domain. Binds to DNA via its C-terminal region. Interacts, and probably forms a ternary complex, with MukE and MukF via its C-terminal region. The complex formation is stimulated by calcium or magnesium. Interacts with tubulin-related protein FtsZ.</text>
</comment>
<comment type="subcellular location">
    <subcellularLocation>
        <location evidence="1">Cytoplasm</location>
        <location evidence="1">Nucleoid</location>
    </subcellularLocation>
    <text evidence="1">Restricted to the nucleoid region.</text>
</comment>
<comment type="domain">
    <text evidence="1">The hinge domain, which separates the large intramolecular coiled coil regions, allows the homodimerization, forming a V-shaped homodimer.</text>
</comment>
<comment type="similarity">
    <text evidence="1">Belongs to the SMC family. MukB subfamily.</text>
</comment>
<proteinExistence type="inferred from homology"/>
<accession>Q6D447</accession>
<sequence>MIERGKFRSLTLVNWNGFFARTFDLDELVTTLSGGNGAGKSTTMAAFITALIPDLTLLHFRNTTEAGATSGSRDKGLHGKLRAGVCYSTLDVVNSRHQRVLVGVRLQQVAGRDRKVDIKPFTIQGLPTAIQPTQILTQIVGDRQARVLSLQELKERVEEMEGVQFKQFNSITDYHSLMFDLGVVPRRLRSASDRSKFYRLIEASLYGGISSAITRSLRDYLLPENSGVRKAFQDMEAALRENRMTLEAIRVTQSDRDLFKHLISEATSYVAADYMRHANERRIHLDGALELRRDLFSSRKQLSSEQYRHVEMARELTEQNDTEGDLETDYQAASDHLNLVQTAMRQQEKIERYNADLEELSYRLEEQNEVVEEARDQQAENEERADAAELEVDELKSQLADYQQALDVQQTRAIQYQQAQQALERARTLCQLPDLTAENADEWLDSYQAREQEATEILLMLEQKLSVADAAHGQFEQAYQLVSKIAGAVSRSEAWQVARDLLRDSSSQRYQAERVQPLRMRLSELEQRLREQQDAERLLQDFSKRNGQDYQPEELESLQQELDARIETLSSLVAEAGERRMTLRQELEQTQQRIQKLTARAPVWLAAQETLTQLSEQSGETFEDSRQVTEFMQQLLERERETTVERDDIAARKRQIEAQVDRLSQPGGSEDPRLNALAERFGGVLLSEIYDDVTLDDAPYFSALYGPSRHAIVVSDLSLIRDQLAGLEDCPEDLYLIEGDPQSFDDSVFAVDELERAVVVKVAERQWRYSRFPEVPLFGRAAREMRLEGLRDEREALAEQYATLSFDVQKTQRLHQSFSRFIGTHLAVVFDEDPEAEIRTLSSRRGELDRAMASFDGENQQQRQQYEQAKEASGQLNKLIPRISLLCDETLQDRVEEIRAELDETEESARFIQQHGVTLTKLEPLVSVLQSDPQQHEQLQEDYTQAQNAQRQAKQQAFTLTEVVQRRAHFSYADSAGMLGENAGLNDKLRHRLEQAEAERTKAREQLRQHQTQLTQYSQVQASLKSSYDAKQDMLKELLQELQDIGVRADADAEARARQRRDELHAALSTNRSRRNQLEKQITFCEAEMDSVQKKLRKLERDYHQMREQVVTAKAGWCTVMRLVKDNGVERRLHRRELAYMEGDELRSMSDKALGALRLAVADNEHLRDVLRLSEDPKRPERKIQFYIAVYQHLRERIRQDIIRTDDPVEAIEQMEIELNRLTEELMAREQMLAISSRSVANIIRKTIQREQNRIRMLNQGLQAVSFGQVKSVRLNVNVRETHTTLLNVLSEQQEMHQDLFNSNRLTFSEALAKLYQRLNPEIDMGQRTPQTIGEELLDYRNYLEMEVEVNRGADGWLRAESGALSTGEAIGTGMSILVMVVQSWEEESKRLRGKDIIPCRLLFLDEAARLDAKSIATLFELCDRLEMQLVIAAPENISPEKGTTYKLVRKVYQNNEHVHVVGLRGFGTETPETQEPAS</sequence>
<reference key="1">
    <citation type="journal article" date="2004" name="Proc. Natl. Acad. Sci. U.S.A.">
        <title>Genome sequence of the enterobacterial phytopathogen Erwinia carotovora subsp. atroseptica and characterization of virulence factors.</title>
        <authorList>
            <person name="Bell K.S."/>
            <person name="Sebaihia M."/>
            <person name="Pritchard L."/>
            <person name="Holden M.T.G."/>
            <person name="Hyman L.J."/>
            <person name="Holeva M.C."/>
            <person name="Thomson N.R."/>
            <person name="Bentley S.D."/>
            <person name="Churcher L.J.C."/>
            <person name="Mungall K."/>
            <person name="Atkin R."/>
            <person name="Bason N."/>
            <person name="Brooks K."/>
            <person name="Chillingworth T."/>
            <person name="Clark K."/>
            <person name="Doggett J."/>
            <person name="Fraser A."/>
            <person name="Hance Z."/>
            <person name="Hauser H."/>
            <person name="Jagels K."/>
            <person name="Moule S."/>
            <person name="Norbertczak H."/>
            <person name="Ormond D."/>
            <person name="Price C."/>
            <person name="Quail M.A."/>
            <person name="Sanders M."/>
            <person name="Walker D."/>
            <person name="Whitehead S."/>
            <person name="Salmond G.P.C."/>
            <person name="Birch P.R.J."/>
            <person name="Parkhill J."/>
            <person name="Toth I.K."/>
        </authorList>
    </citation>
    <scope>NUCLEOTIDE SEQUENCE [LARGE SCALE GENOMIC DNA]</scope>
    <source>
        <strain>SCRI 1043 / ATCC BAA-672</strain>
    </source>
</reference>
<evidence type="ECO:0000255" key="1">
    <source>
        <dbReference type="HAMAP-Rule" id="MF_01800"/>
    </source>
</evidence>
<organism>
    <name type="scientific">Pectobacterium atrosepticum (strain SCRI 1043 / ATCC BAA-672)</name>
    <name type="common">Erwinia carotovora subsp. atroseptica</name>
    <dbReference type="NCBI Taxonomy" id="218491"/>
    <lineage>
        <taxon>Bacteria</taxon>
        <taxon>Pseudomonadati</taxon>
        <taxon>Pseudomonadota</taxon>
        <taxon>Gammaproteobacteria</taxon>
        <taxon>Enterobacterales</taxon>
        <taxon>Pectobacteriaceae</taxon>
        <taxon>Pectobacterium</taxon>
    </lineage>
</organism>
<gene>
    <name evidence="1" type="primary">mukB</name>
    <name type="ordered locus">ECA2547</name>
</gene>
<feature type="chain" id="PRO_0000068217" description="Chromosome partition protein MukB">
    <location>
        <begin position="1"/>
        <end position="1479"/>
    </location>
</feature>
<feature type="region of interest" description="Flexible hinge" evidence="1">
    <location>
        <begin position="666"/>
        <end position="783"/>
    </location>
</feature>
<feature type="coiled-coil region" evidence="1">
    <location>
        <begin position="337"/>
        <end position="418"/>
    </location>
</feature>
<feature type="coiled-coil region" evidence="1">
    <location>
        <begin position="511"/>
        <end position="604"/>
    </location>
</feature>
<feature type="coiled-coil region" evidence="1">
    <location>
        <begin position="780"/>
        <end position="810"/>
    </location>
</feature>
<feature type="coiled-coil region" evidence="1">
    <location>
        <begin position="847"/>
        <end position="1116"/>
    </location>
</feature>
<feature type="coiled-coil region" evidence="1">
    <location>
        <begin position="1206"/>
        <end position="1265"/>
    </location>
</feature>
<feature type="binding site" evidence="1">
    <location>
        <begin position="34"/>
        <end position="41"/>
    </location>
    <ligand>
        <name>ATP</name>
        <dbReference type="ChEBI" id="CHEBI:30616"/>
    </ligand>
</feature>
<protein>
    <recommendedName>
        <fullName evidence="1">Chromosome partition protein MukB</fullName>
    </recommendedName>
    <alternativeName>
        <fullName evidence="1">Structural maintenance of chromosome-related protein</fullName>
    </alternativeName>
</protein>
<name>MUKB_PECAS</name>
<keyword id="KW-0067">ATP-binding</keyword>
<keyword id="KW-0131">Cell cycle</keyword>
<keyword id="KW-0132">Cell division</keyword>
<keyword id="KW-0159">Chromosome partition</keyword>
<keyword id="KW-0175">Coiled coil</keyword>
<keyword id="KW-0963">Cytoplasm</keyword>
<keyword id="KW-0226">DNA condensation</keyword>
<keyword id="KW-0238">DNA-binding</keyword>
<keyword id="KW-0547">Nucleotide-binding</keyword>
<keyword id="KW-1185">Reference proteome</keyword>
<dbReference type="EMBL" id="BX950851">
    <property type="protein sequence ID" value="CAG75446.1"/>
    <property type="molecule type" value="Genomic_DNA"/>
</dbReference>
<dbReference type="RefSeq" id="WP_011094092.1">
    <property type="nucleotide sequence ID" value="NC_004547.2"/>
</dbReference>
<dbReference type="SMR" id="Q6D447"/>
<dbReference type="STRING" id="218491.ECA2547"/>
<dbReference type="KEGG" id="eca:ECA2547"/>
<dbReference type="PATRIC" id="fig|218491.5.peg.2580"/>
<dbReference type="eggNOG" id="COG3096">
    <property type="taxonomic scope" value="Bacteria"/>
</dbReference>
<dbReference type="HOGENOM" id="CLU_004430_0_0_6"/>
<dbReference type="OrthoDB" id="6722439at2"/>
<dbReference type="Proteomes" id="UP000007966">
    <property type="component" value="Chromosome"/>
</dbReference>
<dbReference type="GO" id="GO:0005737">
    <property type="term" value="C:cytoplasm"/>
    <property type="evidence" value="ECO:0007669"/>
    <property type="project" value="UniProtKB-UniRule"/>
</dbReference>
<dbReference type="GO" id="GO:0009295">
    <property type="term" value="C:nucleoid"/>
    <property type="evidence" value="ECO:0007669"/>
    <property type="project" value="UniProtKB-SubCell"/>
</dbReference>
<dbReference type="GO" id="GO:0005524">
    <property type="term" value="F:ATP binding"/>
    <property type="evidence" value="ECO:0007669"/>
    <property type="project" value="UniProtKB-UniRule"/>
</dbReference>
<dbReference type="GO" id="GO:0003677">
    <property type="term" value="F:DNA binding"/>
    <property type="evidence" value="ECO:0007669"/>
    <property type="project" value="UniProtKB-UniRule"/>
</dbReference>
<dbReference type="GO" id="GO:0051301">
    <property type="term" value="P:cell division"/>
    <property type="evidence" value="ECO:0007669"/>
    <property type="project" value="UniProtKB-KW"/>
</dbReference>
<dbReference type="GO" id="GO:0030261">
    <property type="term" value="P:chromosome condensation"/>
    <property type="evidence" value="ECO:0007669"/>
    <property type="project" value="UniProtKB-KW"/>
</dbReference>
<dbReference type="GO" id="GO:0007059">
    <property type="term" value="P:chromosome segregation"/>
    <property type="evidence" value="ECO:0007669"/>
    <property type="project" value="UniProtKB-UniRule"/>
</dbReference>
<dbReference type="GO" id="GO:0006260">
    <property type="term" value="P:DNA replication"/>
    <property type="evidence" value="ECO:0007669"/>
    <property type="project" value="UniProtKB-UniRule"/>
</dbReference>
<dbReference type="FunFam" id="3.30.70.3500:FF:000001">
    <property type="entry name" value="Chromosome partition protein MukB"/>
    <property type="match status" value="1"/>
</dbReference>
<dbReference type="FunFam" id="3.40.1140.10:FF:000002">
    <property type="entry name" value="Chromosome partition protein MukB"/>
    <property type="match status" value="1"/>
</dbReference>
<dbReference type="Gene3D" id="1.20.58.850">
    <property type="match status" value="1"/>
</dbReference>
<dbReference type="Gene3D" id="3.40.1140.10">
    <property type="match status" value="2"/>
</dbReference>
<dbReference type="Gene3D" id="1.20.5.420">
    <property type="entry name" value="Immunoglobulin FC, subunit C"/>
    <property type="match status" value="1"/>
</dbReference>
<dbReference type="Gene3D" id="3.30.70.3500">
    <property type="entry name" value="MukB, hinge domain"/>
    <property type="match status" value="1"/>
</dbReference>
<dbReference type="HAMAP" id="MF_01800">
    <property type="entry name" value="MukB"/>
    <property type="match status" value="1"/>
</dbReference>
<dbReference type="InterPro" id="IPR012090">
    <property type="entry name" value="MukB"/>
</dbReference>
<dbReference type="InterPro" id="IPR050308">
    <property type="entry name" value="MukB/SMC"/>
</dbReference>
<dbReference type="InterPro" id="IPR032520">
    <property type="entry name" value="MukB_hinge"/>
</dbReference>
<dbReference type="InterPro" id="IPR042501">
    <property type="entry name" value="MukB_hinge_sf"/>
</dbReference>
<dbReference type="InterPro" id="IPR007406">
    <property type="entry name" value="MukB_N_dom"/>
</dbReference>
<dbReference type="InterPro" id="IPR027417">
    <property type="entry name" value="P-loop_NTPase"/>
</dbReference>
<dbReference type="NCBIfam" id="NF003422">
    <property type="entry name" value="PRK04863.1"/>
    <property type="match status" value="1"/>
</dbReference>
<dbReference type="PANTHER" id="PTHR42963">
    <property type="entry name" value="CHROMOSOME PARTITION PROTEIN MUKB"/>
    <property type="match status" value="1"/>
</dbReference>
<dbReference type="PANTHER" id="PTHR42963:SF1">
    <property type="entry name" value="DUF4476 DOMAIN-CONTAINING PROTEIN"/>
    <property type="match status" value="1"/>
</dbReference>
<dbReference type="Pfam" id="PF04310">
    <property type="entry name" value="MukB"/>
    <property type="match status" value="1"/>
</dbReference>
<dbReference type="Pfam" id="PF16330">
    <property type="entry name" value="MukB_hinge"/>
    <property type="match status" value="1"/>
</dbReference>
<dbReference type="Pfam" id="PF13558">
    <property type="entry name" value="SbcC_Walker_B"/>
    <property type="match status" value="1"/>
</dbReference>
<dbReference type="PIRSF" id="PIRSF005246">
    <property type="entry name" value="MukB"/>
    <property type="match status" value="1"/>
</dbReference>
<dbReference type="SUPFAM" id="SSF52540">
    <property type="entry name" value="P-loop containing nucleoside triphosphate hydrolases"/>
    <property type="match status" value="2"/>
</dbReference>